<evidence type="ECO:0000255" key="1">
    <source>
        <dbReference type="HAMAP-Rule" id="MF_00139"/>
    </source>
</evidence>
<evidence type="ECO:0000255" key="2">
    <source>
        <dbReference type="PROSITE-ProRule" id="PRU01202"/>
    </source>
</evidence>
<protein>
    <recommendedName>
        <fullName evidence="1">Bifunctional purine biosynthesis protein PurH</fullName>
    </recommendedName>
    <domain>
        <recommendedName>
            <fullName evidence="1">Phosphoribosylaminoimidazolecarboxamide formyltransferase</fullName>
            <ecNumber evidence="1">2.1.2.3</ecNumber>
        </recommendedName>
        <alternativeName>
            <fullName evidence="1">AICAR transformylase</fullName>
        </alternativeName>
    </domain>
    <domain>
        <recommendedName>
            <fullName evidence="1">IMP cyclohydrolase</fullName>
            <ecNumber evidence="1">3.5.4.10</ecNumber>
        </recommendedName>
        <alternativeName>
            <fullName evidence="1">ATIC</fullName>
        </alternativeName>
        <alternativeName>
            <fullName evidence="1">IMP synthase</fullName>
        </alternativeName>
        <alternativeName>
            <fullName evidence="1">Inosinicase</fullName>
        </alternativeName>
    </domain>
</protein>
<gene>
    <name evidence="1" type="primary">purH</name>
    <name type="ordered locus">SAS1009</name>
</gene>
<name>PUR9_STAAS</name>
<comment type="catalytic activity">
    <reaction evidence="1">
        <text>(6R)-10-formyltetrahydrofolate + 5-amino-1-(5-phospho-beta-D-ribosyl)imidazole-4-carboxamide = 5-formamido-1-(5-phospho-D-ribosyl)imidazole-4-carboxamide + (6S)-5,6,7,8-tetrahydrofolate</text>
        <dbReference type="Rhea" id="RHEA:22192"/>
        <dbReference type="ChEBI" id="CHEBI:57453"/>
        <dbReference type="ChEBI" id="CHEBI:58467"/>
        <dbReference type="ChEBI" id="CHEBI:58475"/>
        <dbReference type="ChEBI" id="CHEBI:195366"/>
        <dbReference type="EC" id="2.1.2.3"/>
    </reaction>
</comment>
<comment type="catalytic activity">
    <reaction evidence="1">
        <text>IMP + H2O = 5-formamido-1-(5-phospho-D-ribosyl)imidazole-4-carboxamide</text>
        <dbReference type="Rhea" id="RHEA:18445"/>
        <dbReference type="ChEBI" id="CHEBI:15377"/>
        <dbReference type="ChEBI" id="CHEBI:58053"/>
        <dbReference type="ChEBI" id="CHEBI:58467"/>
        <dbReference type="EC" id="3.5.4.10"/>
    </reaction>
</comment>
<comment type="pathway">
    <text evidence="1">Purine metabolism; IMP biosynthesis via de novo pathway; 5-formamido-1-(5-phospho-D-ribosyl)imidazole-4-carboxamide from 5-amino-1-(5-phospho-D-ribosyl)imidazole-4-carboxamide (10-formyl THF route): step 1/1.</text>
</comment>
<comment type="pathway">
    <text evidence="1">Purine metabolism; IMP biosynthesis via de novo pathway; IMP from 5-formamido-1-(5-phospho-D-ribosyl)imidazole-4-carboxamide: step 1/1.</text>
</comment>
<comment type="domain">
    <text evidence="1">The IMP cyclohydrolase activity resides in the N-terminal region.</text>
</comment>
<comment type="similarity">
    <text evidence="1">Belongs to the PurH family.</text>
</comment>
<sequence>MKKAILSVSNKTGIVEFAKALTQLNYELYSTGGTKRILDEANVPVRSVSDLTHFPEIMDGRVKTLHPAVHGGILADRNKPQHLNELSEQHIDLIDMVVVNLYPFQQTVANPDVTMDEAIENIDIGGPTMLRAAAKNYKHVTTIVHPADYQEVLTRLRNDSLDESYRQSLMIKVFEHTAEYDEAIVRFFKGDKETLRYGENPQQSAYFVRTSNAKHTIAGAKQLHGKQLSYNNIKDADATLALVKKFDTPATVAVKHMNPCGVGIGDTIEQAFQHAYEADSQSIFGGIVALNRAVTPELAEQLHSIFLEVIIAPKFTDEALDILKQKKNVRLLEIDMTIDSNEEEFVSVSGGYLVQDKDNYVVPKEEMKVVTEVAPTDEQWEAMLLGWKVVPSVKSNAIILSNNKQTVGIGAGQMNRVGAAKIALERAIEINDHVALVSDGFFPMGDTVELAAQHGIKAIIQPGGSIKDQDSIDMANKHGIAMVVTGTRHFKH</sequence>
<reference key="1">
    <citation type="journal article" date="2004" name="Proc. Natl. Acad. Sci. U.S.A.">
        <title>Complete genomes of two clinical Staphylococcus aureus strains: evidence for the rapid evolution of virulence and drug resistance.</title>
        <authorList>
            <person name="Holden M.T.G."/>
            <person name="Feil E.J."/>
            <person name="Lindsay J.A."/>
            <person name="Peacock S.J."/>
            <person name="Day N.P.J."/>
            <person name="Enright M.C."/>
            <person name="Foster T.J."/>
            <person name="Moore C.E."/>
            <person name="Hurst L."/>
            <person name="Atkin R."/>
            <person name="Barron A."/>
            <person name="Bason N."/>
            <person name="Bentley S.D."/>
            <person name="Chillingworth C."/>
            <person name="Chillingworth T."/>
            <person name="Churcher C."/>
            <person name="Clark L."/>
            <person name="Corton C."/>
            <person name="Cronin A."/>
            <person name="Doggett J."/>
            <person name="Dowd L."/>
            <person name="Feltwell T."/>
            <person name="Hance Z."/>
            <person name="Harris B."/>
            <person name="Hauser H."/>
            <person name="Holroyd S."/>
            <person name="Jagels K."/>
            <person name="James K.D."/>
            <person name="Lennard N."/>
            <person name="Line A."/>
            <person name="Mayes R."/>
            <person name="Moule S."/>
            <person name="Mungall K."/>
            <person name="Ormond D."/>
            <person name="Quail M.A."/>
            <person name="Rabbinowitsch E."/>
            <person name="Rutherford K.M."/>
            <person name="Sanders M."/>
            <person name="Sharp S."/>
            <person name="Simmonds M."/>
            <person name="Stevens K."/>
            <person name="Whitehead S."/>
            <person name="Barrell B.G."/>
            <person name="Spratt B.G."/>
            <person name="Parkhill J."/>
        </authorList>
    </citation>
    <scope>NUCLEOTIDE SEQUENCE [LARGE SCALE GENOMIC DNA]</scope>
    <source>
        <strain>MSSA476</strain>
    </source>
</reference>
<keyword id="KW-0378">Hydrolase</keyword>
<keyword id="KW-0511">Multifunctional enzyme</keyword>
<keyword id="KW-0658">Purine biosynthesis</keyword>
<keyword id="KW-0808">Transferase</keyword>
<dbReference type="EC" id="2.1.2.3" evidence="1"/>
<dbReference type="EC" id="3.5.4.10" evidence="1"/>
<dbReference type="EMBL" id="BX571857">
    <property type="protein sequence ID" value="CAG42783.1"/>
    <property type="molecule type" value="Genomic_DNA"/>
</dbReference>
<dbReference type="RefSeq" id="WP_000709290.1">
    <property type="nucleotide sequence ID" value="NC_002953.3"/>
</dbReference>
<dbReference type="SMR" id="Q6GAE0"/>
<dbReference type="KEGG" id="sas:SAS1009"/>
<dbReference type="HOGENOM" id="CLU_016316_5_2_9"/>
<dbReference type="UniPathway" id="UPA00074">
    <property type="reaction ID" value="UER00133"/>
</dbReference>
<dbReference type="UniPathway" id="UPA00074">
    <property type="reaction ID" value="UER00135"/>
</dbReference>
<dbReference type="GO" id="GO:0005829">
    <property type="term" value="C:cytosol"/>
    <property type="evidence" value="ECO:0007669"/>
    <property type="project" value="TreeGrafter"/>
</dbReference>
<dbReference type="GO" id="GO:0003937">
    <property type="term" value="F:IMP cyclohydrolase activity"/>
    <property type="evidence" value="ECO:0007669"/>
    <property type="project" value="UniProtKB-UniRule"/>
</dbReference>
<dbReference type="GO" id="GO:0004643">
    <property type="term" value="F:phosphoribosylaminoimidazolecarboxamide formyltransferase activity"/>
    <property type="evidence" value="ECO:0007669"/>
    <property type="project" value="UniProtKB-UniRule"/>
</dbReference>
<dbReference type="GO" id="GO:0006189">
    <property type="term" value="P:'de novo' IMP biosynthetic process"/>
    <property type="evidence" value="ECO:0007669"/>
    <property type="project" value="UniProtKB-UniRule"/>
</dbReference>
<dbReference type="CDD" id="cd01421">
    <property type="entry name" value="IMPCH"/>
    <property type="match status" value="1"/>
</dbReference>
<dbReference type="FunFam" id="3.40.140.20:FF:000001">
    <property type="entry name" value="Bifunctional purine biosynthesis protein PurH"/>
    <property type="match status" value="1"/>
</dbReference>
<dbReference type="FunFam" id="3.40.140.20:FF:000002">
    <property type="entry name" value="Bifunctional purine biosynthesis protein PurH"/>
    <property type="match status" value="1"/>
</dbReference>
<dbReference type="FunFam" id="3.40.50.1380:FF:000001">
    <property type="entry name" value="Bifunctional purine biosynthesis protein PurH"/>
    <property type="match status" value="1"/>
</dbReference>
<dbReference type="Gene3D" id="3.40.140.20">
    <property type="match status" value="2"/>
</dbReference>
<dbReference type="Gene3D" id="3.40.50.1380">
    <property type="entry name" value="Methylglyoxal synthase-like domain"/>
    <property type="match status" value="1"/>
</dbReference>
<dbReference type="HAMAP" id="MF_00139">
    <property type="entry name" value="PurH"/>
    <property type="match status" value="1"/>
</dbReference>
<dbReference type="InterPro" id="IPR024051">
    <property type="entry name" value="AICAR_Tfase_dup_dom_sf"/>
</dbReference>
<dbReference type="InterPro" id="IPR016193">
    <property type="entry name" value="Cytidine_deaminase-like"/>
</dbReference>
<dbReference type="InterPro" id="IPR011607">
    <property type="entry name" value="MGS-like_dom"/>
</dbReference>
<dbReference type="InterPro" id="IPR036914">
    <property type="entry name" value="MGS-like_dom_sf"/>
</dbReference>
<dbReference type="InterPro" id="IPR002695">
    <property type="entry name" value="PurH-like"/>
</dbReference>
<dbReference type="NCBIfam" id="NF002049">
    <property type="entry name" value="PRK00881.1"/>
    <property type="match status" value="1"/>
</dbReference>
<dbReference type="NCBIfam" id="TIGR00355">
    <property type="entry name" value="purH"/>
    <property type="match status" value="1"/>
</dbReference>
<dbReference type="PANTHER" id="PTHR11692:SF0">
    <property type="entry name" value="BIFUNCTIONAL PURINE BIOSYNTHESIS PROTEIN ATIC"/>
    <property type="match status" value="1"/>
</dbReference>
<dbReference type="PANTHER" id="PTHR11692">
    <property type="entry name" value="BIFUNCTIONAL PURINE BIOSYNTHESIS PROTEIN PURH"/>
    <property type="match status" value="1"/>
</dbReference>
<dbReference type="Pfam" id="PF01808">
    <property type="entry name" value="AICARFT_IMPCHas"/>
    <property type="match status" value="1"/>
</dbReference>
<dbReference type="Pfam" id="PF02142">
    <property type="entry name" value="MGS"/>
    <property type="match status" value="1"/>
</dbReference>
<dbReference type="PIRSF" id="PIRSF000414">
    <property type="entry name" value="AICARFT_IMPCHas"/>
    <property type="match status" value="1"/>
</dbReference>
<dbReference type="SMART" id="SM00798">
    <property type="entry name" value="AICARFT_IMPCHas"/>
    <property type="match status" value="1"/>
</dbReference>
<dbReference type="SMART" id="SM00851">
    <property type="entry name" value="MGS"/>
    <property type="match status" value="1"/>
</dbReference>
<dbReference type="SUPFAM" id="SSF53927">
    <property type="entry name" value="Cytidine deaminase-like"/>
    <property type="match status" value="1"/>
</dbReference>
<dbReference type="SUPFAM" id="SSF52335">
    <property type="entry name" value="Methylglyoxal synthase-like"/>
    <property type="match status" value="1"/>
</dbReference>
<dbReference type="PROSITE" id="PS51855">
    <property type="entry name" value="MGS"/>
    <property type="match status" value="1"/>
</dbReference>
<proteinExistence type="inferred from homology"/>
<feature type="chain" id="PRO_0000192126" description="Bifunctional purine biosynthesis protein PurH">
    <location>
        <begin position="1"/>
        <end position="492"/>
    </location>
</feature>
<feature type="domain" description="MGS-like" evidence="2">
    <location>
        <begin position="1"/>
        <end position="144"/>
    </location>
</feature>
<organism>
    <name type="scientific">Staphylococcus aureus (strain MSSA476)</name>
    <dbReference type="NCBI Taxonomy" id="282459"/>
    <lineage>
        <taxon>Bacteria</taxon>
        <taxon>Bacillati</taxon>
        <taxon>Bacillota</taxon>
        <taxon>Bacilli</taxon>
        <taxon>Bacillales</taxon>
        <taxon>Staphylococcaceae</taxon>
        <taxon>Staphylococcus</taxon>
    </lineage>
</organism>
<accession>Q6GAE0</accession>